<comment type="function">
    <text evidence="1">Catalyzes the hydrolysis of the adenine ring of phosphoribosyl-AMP.</text>
</comment>
<comment type="catalytic activity">
    <reaction evidence="1">
        <text>1-(5-phospho-beta-D-ribosyl)-5'-AMP + H2O = 1-(5-phospho-beta-D-ribosyl)-5-[(5-phospho-beta-D-ribosylamino)methylideneamino]imidazole-4-carboxamide</text>
        <dbReference type="Rhea" id="RHEA:20049"/>
        <dbReference type="ChEBI" id="CHEBI:15377"/>
        <dbReference type="ChEBI" id="CHEBI:58435"/>
        <dbReference type="ChEBI" id="CHEBI:59457"/>
        <dbReference type="EC" id="3.5.4.19"/>
    </reaction>
</comment>
<comment type="cofactor">
    <cofactor evidence="1">
        <name>Mg(2+)</name>
        <dbReference type="ChEBI" id="CHEBI:18420"/>
    </cofactor>
    <text evidence="1">Binds 1 Mg(2+) ion per subunit.</text>
</comment>
<comment type="cofactor">
    <cofactor evidence="1">
        <name>Zn(2+)</name>
        <dbReference type="ChEBI" id="CHEBI:29105"/>
    </cofactor>
    <text evidence="1">Binds 1 zinc ion per subunit.</text>
</comment>
<comment type="pathway">
    <text evidence="1">Amino-acid biosynthesis; L-histidine biosynthesis; L-histidine from 5-phospho-alpha-D-ribose 1-diphosphate: step 3/9.</text>
</comment>
<comment type="subunit">
    <text evidence="1">Homodimer.</text>
</comment>
<comment type="subcellular location">
    <subcellularLocation>
        <location evidence="1">Cytoplasm</location>
    </subcellularLocation>
</comment>
<comment type="similarity">
    <text evidence="1">Belongs to the PRA-CH family.</text>
</comment>
<name>HIS3_SYNC1</name>
<feature type="chain" id="PRO_0000229831" description="Phosphoribosyl-AMP cyclohydrolase">
    <location>
        <begin position="1"/>
        <end position="125"/>
    </location>
</feature>
<feature type="binding site" evidence="1">
    <location>
        <position position="74"/>
    </location>
    <ligand>
        <name>Mg(2+)</name>
        <dbReference type="ChEBI" id="CHEBI:18420"/>
    </ligand>
</feature>
<feature type="binding site" evidence="1">
    <location>
        <position position="75"/>
    </location>
    <ligand>
        <name>Zn(2+)</name>
        <dbReference type="ChEBI" id="CHEBI:29105"/>
        <note>ligand shared between dimeric partners</note>
    </ligand>
</feature>
<feature type="binding site" evidence="1">
    <location>
        <position position="76"/>
    </location>
    <ligand>
        <name>Mg(2+)</name>
        <dbReference type="ChEBI" id="CHEBI:18420"/>
    </ligand>
</feature>
<feature type="binding site" evidence="1">
    <location>
        <position position="78"/>
    </location>
    <ligand>
        <name>Mg(2+)</name>
        <dbReference type="ChEBI" id="CHEBI:18420"/>
    </ligand>
</feature>
<feature type="binding site" evidence="1">
    <location>
        <position position="92"/>
    </location>
    <ligand>
        <name>Zn(2+)</name>
        <dbReference type="ChEBI" id="CHEBI:29105"/>
        <note>ligand shared between dimeric partners</note>
    </ligand>
</feature>
<feature type="binding site" evidence="1">
    <location>
        <position position="99"/>
    </location>
    <ligand>
        <name>Zn(2+)</name>
        <dbReference type="ChEBI" id="CHEBI:29105"/>
        <note>ligand shared between dimeric partners</note>
    </ligand>
</feature>
<organism>
    <name type="scientific">Syntrophotalea carbinolica (strain DSM 2380 / NBRC 103641 / GraBd1)</name>
    <name type="common">Pelobacter carbinolicus</name>
    <dbReference type="NCBI Taxonomy" id="338963"/>
    <lineage>
        <taxon>Bacteria</taxon>
        <taxon>Pseudomonadati</taxon>
        <taxon>Thermodesulfobacteriota</taxon>
        <taxon>Desulfuromonadia</taxon>
        <taxon>Desulfuromonadales</taxon>
        <taxon>Syntrophotaleaceae</taxon>
        <taxon>Syntrophotalea</taxon>
    </lineage>
</organism>
<sequence length="125" mass="14319">MIQIDFEKMGGLVPAIIQDYQTNEVLMVAFIDEKALKLTLETGKTWLFSRSRNKHWMKGEQSGNTQEVQEVYTDCDADALVIKVKQNGGAACHTGNRSCFYVRWEDGAWVEHSEPLFDPDEVYKK</sequence>
<keyword id="KW-0028">Amino-acid biosynthesis</keyword>
<keyword id="KW-0963">Cytoplasm</keyword>
<keyword id="KW-0368">Histidine biosynthesis</keyword>
<keyword id="KW-0378">Hydrolase</keyword>
<keyword id="KW-0460">Magnesium</keyword>
<keyword id="KW-0479">Metal-binding</keyword>
<keyword id="KW-1185">Reference proteome</keyword>
<keyword id="KW-0862">Zinc</keyword>
<proteinExistence type="inferred from homology"/>
<evidence type="ECO:0000255" key="1">
    <source>
        <dbReference type="HAMAP-Rule" id="MF_01021"/>
    </source>
</evidence>
<gene>
    <name evidence="1" type="primary">hisI</name>
    <name type="ordered locus">Pcar_2024</name>
</gene>
<reference key="1">
    <citation type="submission" date="2005-10" db="EMBL/GenBank/DDBJ databases">
        <title>Complete sequence of Pelobacter carbinolicus DSM 2380.</title>
        <authorList>
            <person name="Copeland A."/>
            <person name="Lucas S."/>
            <person name="Lapidus A."/>
            <person name="Barry K."/>
            <person name="Detter J.C."/>
            <person name="Glavina T."/>
            <person name="Hammon N."/>
            <person name="Israni S."/>
            <person name="Pitluck S."/>
            <person name="Chertkov O."/>
            <person name="Schmutz J."/>
            <person name="Larimer F."/>
            <person name="Land M."/>
            <person name="Kyrpides N."/>
            <person name="Ivanova N."/>
            <person name="Richardson P."/>
        </authorList>
    </citation>
    <scope>NUCLEOTIDE SEQUENCE [LARGE SCALE GENOMIC DNA]</scope>
    <source>
        <strain>DSM 2380 / NBRC 103641 / GraBd1</strain>
    </source>
</reference>
<protein>
    <recommendedName>
        <fullName evidence="1">Phosphoribosyl-AMP cyclohydrolase</fullName>
        <shortName evidence="1">PRA-CH</shortName>
        <ecNumber evidence="1">3.5.4.19</ecNumber>
    </recommendedName>
</protein>
<dbReference type="EC" id="3.5.4.19" evidence="1"/>
<dbReference type="EMBL" id="CP000142">
    <property type="protein sequence ID" value="ABA89265.1"/>
    <property type="molecule type" value="Genomic_DNA"/>
</dbReference>
<dbReference type="RefSeq" id="WP_011341775.1">
    <property type="nucleotide sequence ID" value="NC_007498.2"/>
</dbReference>
<dbReference type="SMR" id="Q3A2Z2"/>
<dbReference type="STRING" id="338963.Pcar_2024"/>
<dbReference type="KEGG" id="pca:Pcar_2024"/>
<dbReference type="eggNOG" id="COG0139">
    <property type="taxonomic scope" value="Bacteria"/>
</dbReference>
<dbReference type="HOGENOM" id="CLU_048577_5_0_7"/>
<dbReference type="OrthoDB" id="9795769at2"/>
<dbReference type="UniPathway" id="UPA00031">
    <property type="reaction ID" value="UER00008"/>
</dbReference>
<dbReference type="Proteomes" id="UP000002534">
    <property type="component" value="Chromosome"/>
</dbReference>
<dbReference type="GO" id="GO:0005737">
    <property type="term" value="C:cytoplasm"/>
    <property type="evidence" value="ECO:0007669"/>
    <property type="project" value="UniProtKB-SubCell"/>
</dbReference>
<dbReference type="GO" id="GO:0000287">
    <property type="term" value="F:magnesium ion binding"/>
    <property type="evidence" value="ECO:0007669"/>
    <property type="project" value="UniProtKB-UniRule"/>
</dbReference>
<dbReference type="GO" id="GO:0004635">
    <property type="term" value="F:phosphoribosyl-AMP cyclohydrolase activity"/>
    <property type="evidence" value="ECO:0007669"/>
    <property type="project" value="UniProtKB-UniRule"/>
</dbReference>
<dbReference type="GO" id="GO:0008270">
    <property type="term" value="F:zinc ion binding"/>
    <property type="evidence" value="ECO:0007669"/>
    <property type="project" value="UniProtKB-UniRule"/>
</dbReference>
<dbReference type="GO" id="GO:0000105">
    <property type="term" value="P:L-histidine biosynthetic process"/>
    <property type="evidence" value="ECO:0007669"/>
    <property type="project" value="UniProtKB-UniRule"/>
</dbReference>
<dbReference type="FunFam" id="3.10.20.810:FF:000001">
    <property type="entry name" value="Histidine biosynthesis bifunctional protein HisIE"/>
    <property type="match status" value="1"/>
</dbReference>
<dbReference type="Gene3D" id="3.10.20.810">
    <property type="entry name" value="Phosphoribosyl-AMP cyclohydrolase"/>
    <property type="match status" value="1"/>
</dbReference>
<dbReference type="HAMAP" id="MF_01021">
    <property type="entry name" value="HisI"/>
    <property type="match status" value="1"/>
</dbReference>
<dbReference type="InterPro" id="IPR026660">
    <property type="entry name" value="PRA-CH"/>
</dbReference>
<dbReference type="InterPro" id="IPR002496">
    <property type="entry name" value="PRib_AMP_CycHydrolase_dom"/>
</dbReference>
<dbReference type="InterPro" id="IPR038019">
    <property type="entry name" value="PRib_AMP_CycHydrolase_sf"/>
</dbReference>
<dbReference type="NCBIfam" id="NF000768">
    <property type="entry name" value="PRK00051.1"/>
    <property type="match status" value="1"/>
</dbReference>
<dbReference type="PANTHER" id="PTHR42945">
    <property type="entry name" value="HISTIDINE BIOSYNTHESIS BIFUNCTIONAL PROTEIN"/>
    <property type="match status" value="1"/>
</dbReference>
<dbReference type="PANTHER" id="PTHR42945:SF1">
    <property type="entry name" value="HISTIDINE BIOSYNTHESIS BIFUNCTIONAL PROTEIN HIS7"/>
    <property type="match status" value="1"/>
</dbReference>
<dbReference type="Pfam" id="PF01502">
    <property type="entry name" value="PRA-CH"/>
    <property type="match status" value="1"/>
</dbReference>
<dbReference type="SUPFAM" id="SSF141734">
    <property type="entry name" value="HisI-like"/>
    <property type="match status" value="1"/>
</dbReference>
<accession>Q3A2Z2</accession>